<keyword id="KW-0067">ATP-binding</keyword>
<keyword id="KW-0997">Cell inner membrane</keyword>
<keyword id="KW-1003">Cell membrane</keyword>
<keyword id="KW-0472">Membrane</keyword>
<keyword id="KW-0547">Nucleotide-binding</keyword>
<keyword id="KW-1185">Reference proteome</keyword>
<keyword id="KW-1278">Translocase</keyword>
<keyword id="KW-0813">Transport</keyword>
<gene>
    <name evidence="1" type="primary">lolD</name>
    <name type="ordered locus">RHE_CH01625</name>
</gene>
<protein>
    <recommendedName>
        <fullName evidence="1">Lipoprotein-releasing system ATP-binding protein LolD</fullName>
        <ecNumber evidence="1">7.6.2.-</ecNumber>
    </recommendedName>
</protein>
<dbReference type="EC" id="7.6.2.-" evidence="1"/>
<dbReference type="EMBL" id="CP000133">
    <property type="protein sequence ID" value="ABC90424.1"/>
    <property type="molecule type" value="Genomic_DNA"/>
</dbReference>
<dbReference type="RefSeq" id="WP_011424942.1">
    <property type="nucleotide sequence ID" value="NC_007761.1"/>
</dbReference>
<dbReference type="SMR" id="Q2K9R2"/>
<dbReference type="KEGG" id="ret:RHE_CH01625"/>
<dbReference type="eggNOG" id="COG1136">
    <property type="taxonomic scope" value="Bacteria"/>
</dbReference>
<dbReference type="HOGENOM" id="CLU_000604_1_22_5"/>
<dbReference type="OrthoDB" id="9787227at2"/>
<dbReference type="Proteomes" id="UP000001936">
    <property type="component" value="Chromosome"/>
</dbReference>
<dbReference type="GO" id="GO:0005886">
    <property type="term" value="C:plasma membrane"/>
    <property type="evidence" value="ECO:0007669"/>
    <property type="project" value="UniProtKB-SubCell"/>
</dbReference>
<dbReference type="GO" id="GO:0005524">
    <property type="term" value="F:ATP binding"/>
    <property type="evidence" value="ECO:0007669"/>
    <property type="project" value="UniProtKB-KW"/>
</dbReference>
<dbReference type="GO" id="GO:0016887">
    <property type="term" value="F:ATP hydrolysis activity"/>
    <property type="evidence" value="ECO:0007669"/>
    <property type="project" value="InterPro"/>
</dbReference>
<dbReference type="GO" id="GO:0022857">
    <property type="term" value="F:transmembrane transporter activity"/>
    <property type="evidence" value="ECO:0007669"/>
    <property type="project" value="TreeGrafter"/>
</dbReference>
<dbReference type="GO" id="GO:0044874">
    <property type="term" value="P:lipoprotein localization to outer membrane"/>
    <property type="evidence" value="ECO:0007669"/>
    <property type="project" value="TreeGrafter"/>
</dbReference>
<dbReference type="GO" id="GO:0089705">
    <property type="term" value="P:protein localization to outer membrane"/>
    <property type="evidence" value="ECO:0007669"/>
    <property type="project" value="TreeGrafter"/>
</dbReference>
<dbReference type="CDD" id="cd03255">
    <property type="entry name" value="ABC_MJ0796_LolCDE_FtsE"/>
    <property type="match status" value="1"/>
</dbReference>
<dbReference type="FunFam" id="3.40.50.300:FF:000032">
    <property type="entry name" value="Export ABC transporter ATP-binding protein"/>
    <property type="match status" value="1"/>
</dbReference>
<dbReference type="Gene3D" id="3.40.50.300">
    <property type="entry name" value="P-loop containing nucleotide triphosphate hydrolases"/>
    <property type="match status" value="1"/>
</dbReference>
<dbReference type="InterPro" id="IPR003593">
    <property type="entry name" value="AAA+_ATPase"/>
</dbReference>
<dbReference type="InterPro" id="IPR003439">
    <property type="entry name" value="ABC_transporter-like_ATP-bd"/>
</dbReference>
<dbReference type="InterPro" id="IPR017871">
    <property type="entry name" value="ABC_transporter-like_CS"/>
</dbReference>
<dbReference type="InterPro" id="IPR015854">
    <property type="entry name" value="ABC_transpr_LolD-like"/>
</dbReference>
<dbReference type="InterPro" id="IPR017911">
    <property type="entry name" value="MacB-like_ATP-bd"/>
</dbReference>
<dbReference type="InterPro" id="IPR027417">
    <property type="entry name" value="P-loop_NTPase"/>
</dbReference>
<dbReference type="PANTHER" id="PTHR24220">
    <property type="entry name" value="IMPORT ATP-BINDING PROTEIN"/>
    <property type="match status" value="1"/>
</dbReference>
<dbReference type="PANTHER" id="PTHR24220:SF689">
    <property type="entry name" value="LIPOPROTEIN-RELEASING SYSTEM ATP-BINDING PROTEIN LOLD"/>
    <property type="match status" value="1"/>
</dbReference>
<dbReference type="Pfam" id="PF00005">
    <property type="entry name" value="ABC_tran"/>
    <property type="match status" value="1"/>
</dbReference>
<dbReference type="SMART" id="SM00382">
    <property type="entry name" value="AAA"/>
    <property type="match status" value="1"/>
</dbReference>
<dbReference type="SUPFAM" id="SSF52540">
    <property type="entry name" value="P-loop containing nucleoside triphosphate hydrolases"/>
    <property type="match status" value="1"/>
</dbReference>
<dbReference type="PROSITE" id="PS00211">
    <property type="entry name" value="ABC_TRANSPORTER_1"/>
    <property type="match status" value="1"/>
</dbReference>
<dbReference type="PROSITE" id="PS50893">
    <property type="entry name" value="ABC_TRANSPORTER_2"/>
    <property type="match status" value="1"/>
</dbReference>
<dbReference type="PROSITE" id="PS51244">
    <property type="entry name" value="LOLD"/>
    <property type="match status" value="1"/>
</dbReference>
<organism>
    <name type="scientific">Rhizobium etli (strain ATCC 51251 / DSM 11541 / JCM 21823 / NBRC 15573 / CFN 42)</name>
    <dbReference type="NCBI Taxonomy" id="347834"/>
    <lineage>
        <taxon>Bacteria</taxon>
        <taxon>Pseudomonadati</taxon>
        <taxon>Pseudomonadota</taxon>
        <taxon>Alphaproteobacteria</taxon>
        <taxon>Hyphomicrobiales</taxon>
        <taxon>Rhizobiaceae</taxon>
        <taxon>Rhizobium/Agrobacterium group</taxon>
        <taxon>Rhizobium</taxon>
    </lineage>
</organism>
<proteinExistence type="inferred from homology"/>
<reference key="1">
    <citation type="journal article" date="2006" name="Proc. Natl. Acad. Sci. U.S.A.">
        <title>The partitioned Rhizobium etli genome: genetic and metabolic redundancy in seven interacting replicons.</title>
        <authorList>
            <person name="Gonzalez V."/>
            <person name="Santamaria R.I."/>
            <person name="Bustos P."/>
            <person name="Hernandez-Gonzalez I."/>
            <person name="Medrano-Soto A."/>
            <person name="Moreno-Hagelsieb G."/>
            <person name="Janga S.C."/>
            <person name="Ramirez M.A."/>
            <person name="Jimenez-Jacinto V."/>
            <person name="Collado-Vides J."/>
            <person name="Davila G."/>
        </authorList>
    </citation>
    <scope>NUCLEOTIDE SEQUENCE [LARGE SCALE GENOMIC DNA]</scope>
    <source>
        <strain>ATCC 51251 / DSM 11541 / JCM 21823 / NBRC 15573 / CFN 42</strain>
    </source>
</reference>
<sequence>MNRNVVLKLTGVERHYGQGDTLLTILKGADFSLAKGEIVALVAPSGTGKSTLLHVAGLLEHPDGGEVTINGHACDGLSDEKRTAIRRREIGFVYQFHHLLPEFSALENIMMPQLIAGLSWKEAQERAGQLLDYMRIGHRGSHRPAELSGGEQQRVAIARAVANAPTLLLADEPTGNLDPETASYVFDALEALVRQSGLAALIATHNHELAGRMDRRVTISDGKVVEF</sequence>
<name>LOLD_RHIEC</name>
<comment type="function">
    <text evidence="1">Part of the ABC transporter complex LolCDE involved in the translocation of mature outer membrane-directed lipoproteins, from the inner membrane to the periplasmic chaperone, LolA. Responsible for the formation of the LolA-lipoprotein complex in an ATP-dependent manner.</text>
</comment>
<comment type="subunit">
    <text evidence="1">The complex is composed of two ATP-binding proteins (LolD) and two transmembrane proteins (LolC and LolE).</text>
</comment>
<comment type="subcellular location">
    <subcellularLocation>
        <location evidence="1">Cell inner membrane</location>
        <topology evidence="1">Peripheral membrane protein</topology>
    </subcellularLocation>
</comment>
<comment type="similarity">
    <text evidence="1">Belongs to the ABC transporter superfamily. Lipoprotein translocase (TC 3.A.1.125) family.</text>
</comment>
<accession>Q2K9R2</accession>
<evidence type="ECO:0000255" key="1">
    <source>
        <dbReference type="HAMAP-Rule" id="MF_01708"/>
    </source>
</evidence>
<feature type="chain" id="PRO_0000272132" description="Lipoprotein-releasing system ATP-binding protein LolD">
    <location>
        <begin position="1"/>
        <end position="227"/>
    </location>
</feature>
<feature type="domain" description="ABC transporter" evidence="1">
    <location>
        <begin position="7"/>
        <end position="227"/>
    </location>
</feature>
<feature type="binding site" evidence="1">
    <location>
        <begin position="43"/>
        <end position="50"/>
    </location>
    <ligand>
        <name>ATP</name>
        <dbReference type="ChEBI" id="CHEBI:30616"/>
    </ligand>
</feature>